<keyword id="KW-0002">3D-structure</keyword>
<keyword id="KW-1073">Activation of host caspases by virus</keyword>
<keyword id="KW-0014">AIDS</keyword>
<keyword id="KW-0064">Aspartyl protease</keyword>
<keyword id="KW-0167">Capsid protein</keyword>
<keyword id="KW-0229">DNA integration</keyword>
<keyword id="KW-0233">DNA recombination</keyword>
<keyword id="KW-0238">DNA-binding</keyword>
<keyword id="KW-0239">DNA-directed DNA polymerase</keyword>
<keyword id="KW-0255">Endonuclease</keyword>
<keyword id="KW-1262">Eukaryotic host gene expression shutoff by virus</keyword>
<keyword id="KW-1193">Eukaryotic host translation shutoff by virus</keyword>
<keyword id="KW-1032">Host cell membrane</keyword>
<keyword id="KW-1035">Host cytoplasm</keyword>
<keyword id="KW-1039">Host endosome</keyword>
<keyword id="KW-1190">Host gene expression shutoff by virus</keyword>
<keyword id="KW-1043">Host membrane</keyword>
<keyword id="KW-1048">Host nucleus</keyword>
<keyword id="KW-0945">Host-virus interaction</keyword>
<keyword id="KW-0378">Hydrolase</keyword>
<keyword id="KW-0446">Lipid-binding</keyword>
<keyword id="KW-0449">Lipoprotein</keyword>
<keyword id="KW-0460">Magnesium</keyword>
<keyword id="KW-0472">Membrane</keyword>
<keyword id="KW-0479">Metal-binding</keyword>
<keyword id="KW-1119">Modulation of host cell apoptosis by virus</keyword>
<keyword id="KW-0511">Multifunctional enzyme</keyword>
<keyword id="KW-0519">Myristate</keyword>
<keyword id="KW-0540">Nuclease</keyword>
<keyword id="KW-0548">Nucleotidyltransferase</keyword>
<keyword id="KW-0597">Phosphoprotein</keyword>
<keyword id="KW-0645">Protease</keyword>
<keyword id="KW-0677">Repeat</keyword>
<keyword id="KW-0688">Ribosomal frameshifting</keyword>
<keyword id="KW-0694">RNA-binding</keyword>
<keyword id="KW-0695">RNA-directed DNA polymerase</keyword>
<keyword id="KW-0808">Transferase</keyword>
<keyword id="KW-1179">Viral genome integration</keyword>
<keyword id="KW-0543">Viral nucleoprotein</keyword>
<keyword id="KW-1163">Viral penetration into host nucleus</keyword>
<keyword id="KW-1188">Viral release from host cell</keyword>
<keyword id="KW-0946">Virion</keyword>
<keyword id="KW-0917">Virion maturation</keyword>
<keyword id="KW-1160">Virus entry into host cell</keyword>
<keyword id="KW-0862">Zinc</keyword>
<keyword id="KW-0863">Zinc-finger</keyword>
<organism>
    <name type="scientific">Human immunodeficiency virus type 1 group N (isolate YBF106)</name>
    <name type="common">HIV-1</name>
    <dbReference type="NCBI Taxonomy" id="388819"/>
    <lineage>
        <taxon>Viruses</taxon>
        <taxon>Riboviria</taxon>
        <taxon>Pararnavirae</taxon>
        <taxon>Artverviricota</taxon>
        <taxon>Revtraviricetes</taxon>
        <taxon>Ortervirales</taxon>
        <taxon>Retroviridae</taxon>
        <taxon>Orthoretrovirinae</taxon>
        <taxon>Lentivirus</taxon>
        <taxon>Human immunodeficiency virus type 1</taxon>
    </lineage>
</organism>
<dbReference type="EC" id="3.4.23.16"/>
<dbReference type="EC" id="2.7.7.49"/>
<dbReference type="EC" id="2.7.7.7"/>
<dbReference type="EC" id="3.1.26.13"/>
<dbReference type="EC" id="3.1.13.2"/>
<dbReference type="EC" id="2.7.7.-" evidence="5"/>
<dbReference type="EC" id="3.1.-.-" evidence="5"/>
<dbReference type="EMBL" id="AJ271370">
    <property type="protein sequence ID" value="CAB96338.1"/>
    <property type="molecule type" value="Genomic_DNA"/>
</dbReference>
<dbReference type="PDB" id="2HJL">
    <property type="method" value="X-ray"/>
    <property type="resolution" value="1.50 A"/>
    <property type="chains" value="C=164-174"/>
</dbReference>
<dbReference type="PDBsum" id="2HJL"/>
<dbReference type="MEROPS" id="A02.001"/>
<dbReference type="PRO" id="PR:Q9IDV9"/>
<dbReference type="Proteomes" id="UP000007714">
    <property type="component" value="Segment"/>
</dbReference>
<dbReference type="GO" id="GO:0043657">
    <property type="term" value="C:host cell"/>
    <property type="evidence" value="ECO:0007669"/>
    <property type="project" value="GOC"/>
</dbReference>
<dbReference type="GO" id="GO:0042025">
    <property type="term" value="C:host cell nucleus"/>
    <property type="evidence" value="ECO:0007669"/>
    <property type="project" value="UniProtKB-SubCell"/>
</dbReference>
<dbReference type="GO" id="GO:0020002">
    <property type="term" value="C:host cell plasma membrane"/>
    <property type="evidence" value="ECO:0007669"/>
    <property type="project" value="UniProtKB-SubCell"/>
</dbReference>
<dbReference type="GO" id="GO:0072494">
    <property type="term" value="C:host multivesicular body"/>
    <property type="evidence" value="ECO:0007669"/>
    <property type="project" value="UniProtKB-SubCell"/>
</dbReference>
<dbReference type="GO" id="GO:0016020">
    <property type="term" value="C:membrane"/>
    <property type="evidence" value="ECO:0007669"/>
    <property type="project" value="UniProtKB-KW"/>
</dbReference>
<dbReference type="GO" id="GO:0019013">
    <property type="term" value="C:viral nucleocapsid"/>
    <property type="evidence" value="ECO:0007669"/>
    <property type="project" value="UniProtKB-KW"/>
</dbReference>
<dbReference type="GO" id="GO:0055036">
    <property type="term" value="C:virion membrane"/>
    <property type="evidence" value="ECO:0007669"/>
    <property type="project" value="UniProtKB-SubCell"/>
</dbReference>
<dbReference type="GO" id="GO:0004190">
    <property type="term" value="F:aspartic-type endopeptidase activity"/>
    <property type="evidence" value="ECO:0007669"/>
    <property type="project" value="UniProtKB-KW"/>
</dbReference>
<dbReference type="GO" id="GO:0003677">
    <property type="term" value="F:DNA binding"/>
    <property type="evidence" value="ECO:0007669"/>
    <property type="project" value="UniProtKB-KW"/>
</dbReference>
<dbReference type="GO" id="GO:0003887">
    <property type="term" value="F:DNA-directed DNA polymerase activity"/>
    <property type="evidence" value="ECO:0007669"/>
    <property type="project" value="UniProtKB-KW"/>
</dbReference>
<dbReference type="GO" id="GO:0004533">
    <property type="term" value="F:exoribonuclease H activity"/>
    <property type="evidence" value="ECO:0007669"/>
    <property type="project" value="UniProtKB-EC"/>
</dbReference>
<dbReference type="GO" id="GO:0008289">
    <property type="term" value="F:lipid binding"/>
    <property type="evidence" value="ECO:0007669"/>
    <property type="project" value="UniProtKB-KW"/>
</dbReference>
<dbReference type="GO" id="GO:0035613">
    <property type="term" value="F:RNA stem-loop binding"/>
    <property type="evidence" value="ECO:0007669"/>
    <property type="project" value="TreeGrafter"/>
</dbReference>
<dbReference type="GO" id="GO:0003964">
    <property type="term" value="F:RNA-directed DNA polymerase activity"/>
    <property type="evidence" value="ECO:0007669"/>
    <property type="project" value="UniProtKB-KW"/>
</dbReference>
<dbReference type="GO" id="GO:0004523">
    <property type="term" value="F:RNA-DNA hybrid ribonuclease activity"/>
    <property type="evidence" value="ECO:0007669"/>
    <property type="project" value="InterPro"/>
</dbReference>
<dbReference type="GO" id="GO:0005198">
    <property type="term" value="F:structural molecule activity"/>
    <property type="evidence" value="ECO:0007669"/>
    <property type="project" value="InterPro"/>
</dbReference>
<dbReference type="GO" id="GO:0008270">
    <property type="term" value="F:zinc ion binding"/>
    <property type="evidence" value="ECO:0007669"/>
    <property type="project" value="UniProtKB-KW"/>
</dbReference>
<dbReference type="GO" id="GO:0015074">
    <property type="term" value="P:DNA integration"/>
    <property type="evidence" value="ECO:0007669"/>
    <property type="project" value="UniProtKB-KW"/>
</dbReference>
<dbReference type="GO" id="GO:0006310">
    <property type="term" value="P:DNA recombination"/>
    <property type="evidence" value="ECO:0007669"/>
    <property type="project" value="UniProtKB-KW"/>
</dbReference>
<dbReference type="GO" id="GO:0075713">
    <property type="term" value="P:establishment of integrated proviral latency"/>
    <property type="evidence" value="ECO:0007669"/>
    <property type="project" value="UniProtKB-KW"/>
</dbReference>
<dbReference type="GO" id="GO:0006508">
    <property type="term" value="P:proteolysis"/>
    <property type="evidence" value="ECO:0007669"/>
    <property type="project" value="UniProtKB-KW"/>
</dbReference>
<dbReference type="GO" id="GO:0046718">
    <property type="term" value="P:symbiont entry into host cell"/>
    <property type="evidence" value="ECO:0007669"/>
    <property type="project" value="UniProtKB-KW"/>
</dbReference>
<dbReference type="GO" id="GO:0052151">
    <property type="term" value="P:symbiont-mediated activation of host apoptosis"/>
    <property type="evidence" value="ECO:0007669"/>
    <property type="project" value="UniProtKB-KW"/>
</dbReference>
<dbReference type="GO" id="GO:0039657">
    <property type="term" value="P:symbiont-mediated suppression of host gene expression"/>
    <property type="evidence" value="ECO:0007669"/>
    <property type="project" value="UniProtKB-KW"/>
</dbReference>
<dbReference type="GO" id="GO:0044826">
    <property type="term" value="P:viral genome integration into host DNA"/>
    <property type="evidence" value="ECO:0007669"/>
    <property type="project" value="UniProtKB-KW"/>
</dbReference>
<dbReference type="GO" id="GO:0075732">
    <property type="term" value="P:viral penetration into host nucleus"/>
    <property type="evidence" value="ECO:0007669"/>
    <property type="project" value="UniProtKB-KW"/>
</dbReference>
<dbReference type="GO" id="GO:0075523">
    <property type="term" value="P:viral translational frameshifting"/>
    <property type="evidence" value="ECO:0007669"/>
    <property type="project" value="UniProtKB-KW"/>
</dbReference>
<dbReference type="CDD" id="cd05482">
    <property type="entry name" value="HIV_retropepsin_like"/>
    <property type="match status" value="1"/>
</dbReference>
<dbReference type="CDD" id="cd01645">
    <property type="entry name" value="RT_Rtv"/>
    <property type="match status" value="1"/>
</dbReference>
<dbReference type="FunFam" id="1.10.1200.30:FF:000001">
    <property type="entry name" value="Gag polyprotein"/>
    <property type="match status" value="1"/>
</dbReference>
<dbReference type="FunFam" id="3.30.70.270:FF:000006">
    <property type="entry name" value="Gag-Pol polyprotein"/>
    <property type="match status" value="1"/>
</dbReference>
<dbReference type="Gene3D" id="1.10.10.200">
    <property type="match status" value="1"/>
</dbReference>
<dbReference type="Gene3D" id="1.10.1200.30">
    <property type="match status" value="1"/>
</dbReference>
<dbReference type="Gene3D" id="3.30.70.270">
    <property type="match status" value="3"/>
</dbReference>
<dbReference type="Gene3D" id="2.40.70.10">
    <property type="entry name" value="Acid Proteases"/>
    <property type="match status" value="1"/>
</dbReference>
<dbReference type="Gene3D" id="3.10.10.10">
    <property type="entry name" value="HIV Type 1 Reverse Transcriptase, subunit A, domain 1"/>
    <property type="match status" value="1"/>
</dbReference>
<dbReference type="Gene3D" id="1.10.375.10">
    <property type="entry name" value="Human Immunodeficiency Virus Type 1 Capsid Protein"/>
    <property type="match status" value="1"/>
</dbReference>
<dbReference type="Gene3D" id="1.10.150.90">
    <property type="entry name" value="Immunodeficiency lentiviruses, gag gene matrix protein p17"/>
    <property type="match status" value="1"/>
</dbReference>
<dbReference type="Gene3D" id="2.30.30.10">
    <property type="entry name" value="Integrase, C-terminal domain superfamily, retroviral"/>
    <property type="match status" value="1"/>
</dbReference>
<dbReference type="Gene3D" id="3.30.420.10">
    <property type="entry name" value="Ribonuclease H-like superfamily/Ribonuclease H"/>
    <property type="match status" value="2"/>
</dbReference>
<dbReference type="Gene3D" id="1.20.5.760">
    <property type="entry name" value="Single helix bin"/>
    <property type="match status" value="1"/>
</dbReference>
<dbReference type="Gene3D" id="4.10.60.10">
    <property type="entry name" value="Zinc finger, CCHC-type"/>
    <property type="match status" value="1"/>
</dbReference>
<dbReference type="InterPro" id="IPR001969">
    <property type="entry name" value="Aspartic_peptidase_AS"/>
</dbReference>
<dbReference type="InterPro" id="IPR043502">
    <property type="entry name" value="DNA/RNA_pol_sf"/>
</dbReference>
<dbReference type="InterPro" id="IPR045345">
    <property type="entry name" value="Gag_p24_C"/>
</dbReference>
<dbReference type="InterPro" id="IPR017856">
    <property type="entry name" value="Integrase-like_N"/>
</dbReference>
<dbReference type="InterPro" id="IPR036862">
    <property type="entry name" value="Integrase_C_dom_sf_retrovir"/>
</dbReference>
<dbReference type="InterPro" id="IPR001037">
    <property type="entry name" value="Integrase_C_retrovir"/>
</dbReference>
<dbReference type="InterPro" id="IPR001584">
    <property type="entry name" value="Integrase_cat-core"/>
</dbReference>
<dbReference type="InterPro" id="IPR003308">
    <property type="entry name" value="Integrase_Zn-bd_dom_N"/>
</dbReference>
<dbReference type="InterPro" id="IPR000071">
    <property type="entry name" value="Lentvrl_matrix_N"/>
</dbReference>
<dbReference type="InterPro" id="IPR012344">
    <property type="entry name" value="Matrix_HIV/RSV_N"/>
</dbReference>
<dbReference type="InterPro" id="IPR001995">
    <property type="entry name" value="Peptidase_A2_cat"/>
</dbReference>
<dbReference type="InterPro" id="IPR021109">
    <property type="entry name" value="Peptidase_aspartic_dom_sf"/>
</dbReference>
<dbReference type="InterPro" id="IPR034170">
    <property type="entry name" value="Retropepsin-like_cat_dom"/>
</dbReference>
<dbReference type="InterPro" id="IPR018061">
    <property type="entry name" value="Retropepsins"/>
</dbReference>
<dbReference type="InterPro" id="IPR008916">
    <property type="entry name" value="Retrov_capsid_C"/>
</dbReference>
<dbReference type="InterPro" id="IPR008919">
    <property type="entry name" value="Retrov_capsid_N"/>
</dbReference>
<dbReference type="InterPro" id="IPR010999">
    <property type="entry name" value="Retrovr_matrix"/>
</dbReference>
<dbReference type="InterPro" id="IPR043128">
    <property type="entry name" value="Rev_trsase/Diguanyl_cyclase"/>
</dbReference>
<dbReference type="InterPro" id="IPR012337">
    <property type="entry name" value="RNaseH-like_sf"/>
</dbReference>
<dbReference type="InterPro" id="IPR002156">
    <property type="entry name" value="RNaseH_domain"/>
</dbReference>
<dbReference type="InterPro" id="IPR036397">
    <property type="entry name" value="RNaseH_sf"/>
</dbReference>
<dbReference type="InterPro" id="IPR000477">
    <property type="entry name" value="RT_dom"/>
</dbReference>
<dbReference type="InterPro" id="IPR010659">
    <property type="entry name" value="RVT_connect"/>
</dbReference>
<dbReference type="InterPro" id="IPR010661">
    <property type="entry name" value="RVT_thumb"/>
</dbReference>
<dbReference type="InterPro" id="IPR001878">
    <property type="entry name" value="Znf_CCHC"/>
</dbReference>
<dbReference type="InterPro" id="IPR036875">
    <property type="entry name" value="Znf_CCHC_sf"/>
</dbReference>
<dbReference type="PANTHER" id="PTHR41694">
    <property type="entry name" value="ENDOGENOUS RETROVIRUS GROUP K MEMBER POL PROTEIN"/>
    <property type="match status" value="1"/>
</dbReference>
<dbReference type="PANTHER" id="PTHR41694:SF3">
    <property type="entry name" value="RNA-DIRECTED DNA POLYMERASE-RELATED"/>
    <property type="match status" value="1"/>
</dbReference>
<dbReference type="Pfam" id="PF00540">
    <property type="entry name" value="Gag_p17"/>
    <property type="match status" value="1"/>
</dbReference>
<dbReference type="Pfam" id="PF19317">
    <property type="entry name" value="Gag_p24_C"/>
    <property type="match status" value="1"/>
</dbReference>
<dbReference type="Pfam" id="PF00552">
    <property type="entry name" value="IN_DBD_C"/>
    <property type="match status" value="1"/>
</dbReference>
<dbReference type="Pfam" id="PF02022">
    <property type="entry name" value="Integrase_Zn"/>
    <property type="match status" value="1"/>
</dbReference>
<dbReference type="Pfam" id="PF00075">
    <property type="entry name" value="RNase_H"/>
    <property type="match status" value="1"/>
</dbReference>
<dbReference type="Pfam" id="PF00665">
    <property type="entry name" value="rve"/>
    <property type="match status" value="1"/>
</dbReference>
<dbReference type="Pfam" id="PF00077">
    <property type="entry name" value="RVP"/>
    <property type="match status" value="1"/>
</dbReference>
<dbReference type="Pfam" id="PF00078">
    <property type="entry name" value="RVT_1"/>
    <property type="match status" value="1"/>
</dbReference>
<dbReference type="Pfam" id="PF06815">
    <property type="entry name" value="RVT_connect"/>
    <property type="match status" value="1"/>
</dbReference>
<dbReference type="Pfam" id="PF06817">
    <property type="entry name" value="RVT_thumb"/>
    <property type="match status" value="1"/>
</dbReference>
<dbReference type="Pfam" id="PF00098">
    <property type="entry name" value="zf-CCHC"/>
    <property type="match status" value="2"/>
</dbReference>
<dbReference type="PRINTS" id="PR00234">
    <property type="entry name" value="HIV1MATRIX"/>
</dbReference>
<dbReference type="SMART" id="SM00343">
    <property type="entry name" value="ZnF_C2HC"/>
    <property type="match status" value="2"/>
</dbReference>
<dbReference type="SUPFAM" id="SSF50630">
    <property type="entry name" value="Acid proteases"/>
    <property type="match status" value="1"/>
</dbReference>
<dbReference type="SUPFAM" id="SSF50122">
    <property type="entry name" value="DNA-binding domain of retroviral integrase"/>
    <property type="match status" value="1"/>
</dbReference>
<dbReference type="SUPFAM" id="SSF56672">
    <property type="entry name" value="DNA/RNA polymerases"/>
    <property type="match status" value="1"/>
</dbReference>
<dbReference type="SUPFAM" id="SSF46919">
    <property type="entry name" value="N-terminal Zn binding domain of HIV integrase"/>
    <property type="match status" value="1"/>
</dbReference>
<dbReference type="SUPFAM" id="SSF47836">
    <property type="entry name" value="Retroviral matrix proteins"/>
    <property type="match status" value="1"/>
</dbReference>
<dbReference type="SUPFAM" id="SSF47353">
    <property type="entry name" value="Retrovirus capsid dimerization domain-like"/>
    <property type="match status" value="1"/>
</dbReference>
<dbReference type="SUPFAM" id="SSF47943">
    <property type="entry name" value="Retrovirus capsid protein, N-terminal core domain"/>
    <property type="match status" value="1"/>
</dbReference>
<dbReference type="SUPFAM" id="SSF57756">
    <property type="entry name" value="Retrovirus zinc finger-like domains"/>
    <property type="match status" value="1"/>
</dbReference>
<dbReference type="SUPFAM" id="SSF53098">
    <property type="entry name" value="Ribonuclease H-like"/>
    <property type="match status" value="2"/>
</dbReference>
<dbReference type="PROSITE" id="PS50175">
    <property type="entry name" value="ASP_PROT_RETROV"/>
    <property type="match status" value="1"/>
</dbReference>
<dbReference type="PROSITE" id="PS00141">
    <property type="entry name" value="ASP_PROTEASE"/>
    <property type="match status" value="1"/>
</dbReference>
<dbReference type="PROSITE" id="PS50994">
    <property type="entry name" value="INTEGRASE"/>
    <property type="match status" value="1"/>
</dbReference>
<dbReference type="PROSITE" id="PS51027">
    <property type="entry name" value="INTEGRASE_DBD"/>
    <property type="match status" value="1"/>
</dbReference>
<dbReference type="PROSITE" id="PS50879">
    <property type="entry name" value="RNASE_H_1"/>
    <property type="match status" value="1"/>
</dbReference>
<dbReference type="PROSITE" id="PS50878">
    <property type="entry name" value="RT_POL"/>
    <property type="match status" value="1"/>
</dbReference>
<dbReference type="PROSITE" id="PS50158">
    <property type="entry name" value="ZF_CCHC"/>
    <property type="match status" value="2"/>
</dbReference>
<dbReference type="PROSITE" id="PS50876">
    <property type="entry name" value="ZF_INTEGRASE"/>
    <property type="match status" value="1"/>
</dbReference>
<reference key="1">
    <citation type="journal article" date="2004" name="AIDS">
        <title>Phylogenetic characteristics of three new HIV-1 N strains and implications for the origin of group N.</title>
        <authorList>
            <person name="Roques P."/>
            <person name="Robertson D.L."/>
            <person name="Souquiere S."/>
            <person name="Apetrei C."/>
            <person name="Nerrienet E."/>
            <person name="Barre-Sinoussi F."/>
            <person name="Muller-Trutwin M."/>
            <person name="Simon F."/>
        </authorList>
    </citation>
    <scope>NUCLEOTIDE SEQUENCE [GENOMIC DNA]</scope>
</reference>
<evidence type="ECO:0000250" key="1"/>
<evidence type="ECO:0000250" key="2">
    <source>
        <dbReference type="UniProtKB" id="P03347"/>
    </source>
</evidence>
<evidence type="ECO:0000250" key="3">
    <source>
        <dbReference type="UniProtKB" id="P03366"/>
    </source>
</evidence>
<evidence type="ECO:0000250" key="4">
    <source>
        <dbReference type="UniProtKB" id="P03367"/>
    </source>
</evidence>
<evidence type="ECO:0000250" key="5">
    <source>
        <dbReference type="UniProtKB" id="P04585"/>
    </source>
</evidence>
<evidence type="ECO:0000250" key="6">
    <source>
        <dbReference type="UniProtKB" id="P12493"/>
    </source>
</evidence>
<evidence type="ECO:0000250" key="7">
    <source>
        <dbReference type="UniProtKB" id="P12497"/>
    </source>
</evidence>
<evidence type="ECO:0000255" key="8"/>
<evidence type="ECO:0000255" key="9">
    <source>
        <dbReference type="PROSITE-ProRule" id="PRU00047"/>
    </source>
</evidence>
<evidence type="ECO:0000255" key="10">
    <source>
        <dbReference type="PROSITE-ProRule" id="PRU00275"/>
    </source>
</evidence>
<evidence type="ECO:0000255" key="11">
    <source>
        <dbReference type="PROSITE-ProRule" id="PRU00405"/>
    </source>
</evidence>
<evidence type="ECO:0000255" key="12">
    <source>
        <dbReference type="PROSITE-ProRule" id="PRU00408"/>
    </source>
</evidence>
<evidence type="ECO:0000255" key="13">
    <source>
        <dbReference type="PROSITE-ProRule" id="PRU00450"/>
    </source>
</evidence>
<evidence type="ECO:0000255" key="14">
    <source>
        <dbReference type="PROSITE-ProRule" id="PRU00457"/>
    </source>
</evidence>
<evidence type="ECO:0000255" key="15">
    <source>
        <dbReference type="PROSITE-ProRule" id="PRU00506"/>
    </source>
</evidence>
<evidence type="ECO:0000255" key="16">
    <source>
        <dbReference type="PROSITE-ProRule" id="PRU10094"/>
    </source>
</evidence>
<evidence type="ECO:0000256" key="17">
    <source>
        <dbReference type="SAM" id="MobiDB-lite"/>
    </source>
</evidence>
<evidence type="ECO:0000305" key="18"/>
<organismHost>
    <name type="scientific">Homo sapiens</name>
    <name type="common">Human</name>
    <dbReference type="NCBI Taxonomy" id="9606"/>
</organismHost>
<comment type="function">
    <molecule>Gag-Pol polyprotein</molecule>
    <text evidence="1">Mediates, with Gag polyprotein, the essential events in virion assembly, including binding the plasma membrane, making the protein-protein interactions necessary to create spherical particles, recruiting the viral Env proteins, and packaging the genomic RNA via direct interactions with the RNA packaging sequence (Psi). Gag-Pol polyprotein may regulate its own translation, by the binding genomic RNA in the 5'-UTR. At low concentration, the polyprotein would promote translation, whereas at high concentration, the polyprotein would encapsidate genomic RNA and then shut off translation.</text>
</comment>
<comment type="function">
    <molecule>Matrix protein p17</molecule>
    <text evidence="7">Targets the polyprotein to the plasma membrane via a multipartite membrane-binding signal, that includes its myristoylated N-terminus. Matrix protein is part of the pre-integration complex. Implicated in the release from host cell mediated by Vpu. Binds to RNA.</text>
</comment>
<comment type="function">
    <molecule>Capsid protein p24</molecule>
    <text evidence="5 7">Forms the conical core that encapsulates the genomic RNA-nucleocapsid complex in the virion. Most core are conical, with only 7% tubular. The core is constituted by capsid protein hexamer subunits. The core is disassembled soon after virion entry (By similarity). Host restriction factors such as TRIM5-alpha or TRIMCyp bind retroviral capsids and cause premature capsid disassembly, leading to blocks in reverse transcription. Capsid restriction by TRIM5 is one of the factors which restricts HIV-1 to the human species. Host PIN1 apparently facilitates the virion uncoating. On the other hand, interactions with PDZD8 or CYPA stabilize the capsid.</text>
</comment>
<comment type="function">
    <molecule>Nucleocapsid protein p7</molecule>
    <text evidence="5">Encapsulates and protects viral dimeric unspliced genomic RNA (gRNA). Binds these RNAs through its zinc fingers. Acts as a nucleic acid chaperone which is involved in rearangement of nucleic acid secondary structure during gRNA retrotranscription. Also facilitates template switch leading to recombination. As part of the polyprotein, participates in gRNA dimerization, packaging, tRNA incorporation and virion assembly.</text>
</comment>
<comment type="function">
    <molecule>Protease</molecule>
    <text evidence="5 10">Aspartyl protease that mediates proteolytic cleavages of Gag and Gag-Pol polyproteins during or shortly after the release of the virion from the plasma membrane. Cleavages take place as an ordered, step-wise cascade to yield mature proteins. This process is called maturation. Displays maximal activity during the budding process just prior to particle release from the cell. Also cleaves Nef and Vif, probably concomitantly with viral structural proteins on maturation of virus particles. Hydrolyzes host EIF4GI and PABP1 in order to shut off the capped cellular mRNA translation. The resulting inhibition of cellular protein synthesis serves to ensure maximal viral gene expression and to evade host immune response. Also mediates cleavage of host YTHDF3. Mediates cleavage of host CARD8, thereby activating the CARD8 inflammasome, leading to the clearance of latent HIV-1 in patient CD4(+) T-cells after viral reactivation; in contrast, HIV-1 can evade CARD8-sensing when its protease remains inactive in infected cells prior to viral budding (By similarity).</text>
</comment>
<comment type="function">
    <molecule>Reverse transcriptase/ribonuclease H</molecule>
    <text evidence="5">Multifunctional enzyme that converts the viral RNA genome into dsDNA in the cytoplasm, shortly after virus entry into the cell. This enzyme displays a DNA polymerase activity that can copy either DNA or RNA templates, and a ribonuclease H (RNase H) activity that cleaves the RNA strand of RNA-DNA heteroduplexes in a partially processive 3' to 5' endonucleasic mode. Conversion of viral genomic RNA into dsDNA requires many steps. A tRNA(3)-Lys binds to the primer-binding site (PBS) situated at the 5'-end of the viral RNA. RT uses the 3' end of the tRNA primer to perform a short round of RNA-dependent minus-strand DNA synthesis. The reading proceeds through the U5 region and ends after the repeated (R) region which is present at both ends of viral RNA. The portion of the RNA-DNA heteroduplex is digested by the RNase H, resulting in a ssDNA product attached to the tRNA primer. This ssDNA/tRNA hybridizes with the identical R region situated at the 3' end of viral RNA. This template exchange, known as minus-strand DNA strong stop transfer, can be either intra- or intermolecular. RT uses the 3' end of this newly synthesized short ssDNA to perform the RNA-dependent minus-strand DNA synthesis of the whole template. RNase H digests the RNA template except for two polypurine tracts (PPTs) situated at the 5'-end and near the center of the genome. It is not clear if both polymerase and RNase H activities are simultaneous. RNase H probably can proceed both in a polymerase-dependent (RNA cut into small fragments by the same RT performing DNA synthesis) and a polymerase-independent mode (cleavage of remaining RNA fragments by free RTs). Secondly, RT performs DNA-directed plus-strand DNA synthesis using the PPTs that have not been removed by RNase H as primers. PPTs and tRNA primers are then removed by RNase H. The 3' and 5' ssDNA PBS regions hybridize to form a circular dsDNA intermediate. Strand displacement synthesis by RT to the PBS and PPT ends produces a blunt ended, linear dsDNA copy of the viral genome that includes long terminal repeats (LTRs) at both ends.</text>
</comment>
<comment type="function">
    <molecule>Integrase</molecule>
    <text evidence="5">Catalyzes viral DNA integration into the host chromosome, by performing a series of DNA cutting and joining reactions. This enzyme activity takes place after virion entry into a cell and reverse transcription of the RNA genome in dsDNA. The first step in the integration process is 3' processing. This step requires a complex comprising the viral genome, matrix protein, Vpr and integrase. This complex is called the pre-integration complex (PIC). The integrase protein removes 2 nucleotides from each 3' end of the viral DNA, leaving recessed CA OH's at the 3' ends. In the second step, the PIC enters cell nucleus. This process is mediated through integrase and Vpr proteins, and allows the virus to infect a non dividing cell. This ability to enter the nucleus is specific of lentiviruses, other retroviruses cannot and rely on cell division to access cell chromosomes. In the third step, termed strand transfer, the integrase protein joins the previously processed 3' ends to the 5' ends of strands of target cellular DNA at the site of integration. The 5'-ends are produced by integrase-catalyzed staggered cuts, 5 bp apart. A Y-shaped, gapped, recombination intermediate results, with the 5'-ends of the viral DNA strands and the 3' ends of target DNA strands remaining unjoined, flanking a gap of 5 bp. The last step is viral DNA integration into host chromosome. This involves host DNA repair synthesis in which the 5 bp gaps between the unjoined strands are filled in and then ligated. Since this process occurs at both cuts flanking the HIV genome, a 5 bp duplication of host DNA is produced at the ends of HIV-1 integration. Alternatively, Integrase may catalyze the excision of viral DNA just after strand transfer, this is termed disintegration.</text>
</comment>
<comment type="catalytic activity">
    <reaction evidence="10">
        <text>Specific for a P1 residue that is hydrophobic, and P1' variable, but often Pro.</text>
        <dbReference type="EC" id="3.4.23.16"/>
    </reaction>
</comment>
<comment type="catalytic activity">
    <reaction evidence="1">
        <text>Endohydrolysis of RNA in RNA/DNA hybrids. Three different cleavage modes: 1. sequence-specific internal cleavage of RNA. Human immunodeficiency virus type 1 and Moloney murine leukemia virus enzymes prefer to cleave the RNA strand one nucleotide away from the RNA-DNA junction. 2. RNA 5'-end directed cleavage 13-19 nucleotides from the RNA end. 3. DNA 3'-end directed cleavage 15-20 nucleotides away from the primer terminus.</text>
        <dbReference type="EC" id="3.1.26.13"/>
    </reaction>
</comment>
<comment type="catalytic activity">
    <reaction evidence="1">
        <text>3'-end directed exonucleolytic cleavage of viral RNA-DNA hybrid.</text>
        <dbReference type="EC" id="3.1.13.2"/>
    </reaction>
</comment>
<comment type="catalytic activity">
    <reaction evidence="11">
        <text>DNA(n) + a 2'-deoxyribonucleoside 5'-triphosphate = DNA(n+1) + diphosphate</text>
        <dbReference type="Rhea" id="RHEA:22508"/>
        <dbReference type="Rhea" id="RHEA-COMP:17339"/>
        <dbReference type="Rhea" id="RHEA-COMP:17340"/>
        <dbReference type="ChEBI" id="CHEBI:33019"/>
        <dbReference type="ChEBI" id="CHEBI:61560"/>
        <dbReference type="ChEBI" id="CHEBI:173112"/>
        <dbReference type="EC" id="2.7.7.49"/>
    </reaction>
</comment>
<comment type="catalytic activity">
    <reaction evidence="11">
        <text>DNA(n) + a 2'-deoxyribonucleoside 5'-triphosphate = DNA(n+1) + diphosphate</text>
        <dbReference type="Rhea" id="RHEA:22508"/>
        <dbReference type="Rhea" id="RHEA-COMP:17339"/>
        <dbReference type="Rhea" id="RHEA-COMP:17340"/>
        <dbReference type="ChEBI" id="CHEBI:33019"/>
        <dbReference type="ChEBI" id="CHEBI:61560"/>
        <dbReference type="ChEBI" id="CHEBI:173112"/>
        <dbReference type="EC" id="2.7.7.7"/>
    </reaction>
</comment>
<comment type="cofactor">
    <cofactor evidence="1">
        <name>Mg(2+)</name>
        <dbReference type="ChEBI" id="CHEBI:18420"/>
    </cofactor>
    <text evidence="1">Binds 2 magnesium ions for reverse transcriptase polymerase activity.</text>
</comment>
<comment type="cofactor">
    <cofactor evidence="1">
        <name>Mg(2+)</name>
        <dbReference type="ChEBI" id="CHEBI:18420"/>
    </cofactor>
    <text evidence="1">Binds 2 magnesium ions for ribonuclease H (RNase H) activity. Substrate-binding is a precondition for magnesium binding.</text>
</comment>
<comment type="cofactor">
    <cofactor evidence="1">
        <name>Mg(2+)</name>
        <dbReference type="ChEBI" id="CHEBI:18420"/>
    </cofactor>
    <text evidence="1">Magnesium ions are required for integrase activity. Binds at least 1, maybe 2 magnesium ions.</text>
</comment>
<comment type="activity regulation">
    <text evidence="1">Protease: The viral protease is inhibited by many synthetic protease inhibitors (PIs), such as amprenavir, atazanavir, indinavir, loprinavir, nelfinavir, ritonavir and saquinavir. Use of protease inhibitors in tritherapy regimens permit more ambitious therapeutic strategies. Reverse transcriptase/ribonuclease H: RT can be inhibited either by nucleoside RT inhibitors (NRTIs) or by non nucleoside RT inhibitors (NNRTIs). NRTIs act as chain terminators, whereas NNRTIs inhibit DNA polymerization by binding a small hydrophobic pocket near the RT active site and inducing an allosteric change in this region. Classical NRTIs are abacavir, adefovir (PMEA), didanosine (ddI), lamivudine (3TC), stavudine (d4T), tenofovir (PMPA), zalcitabine (ddC), and zidovudine (AZT). Classical NNRTIs are atevirdine (BHAP U-87201E), delavirdine, efavirenz (DMP-266), emivirine (I-EBU), and nevirapine (BI-RG-587). The tritherapies used as a basic effective treatment of AIDS associate two NRTIs and one NNRTI.</text>
</comment>
<comment type="subunit">
    <molecule>Matrix protein p17</molecule>
    <text evidence="5 7">Homotrimer; further assembles as hexamers of trimers (By similarity). Interacts with gp41 (via C-terminus) (By similarity). Interacts with host CALM1; this interaction induces a conformational change in the Matrix protein, triggering exposure of the myristate group (By similarity). Interacts with host AP3D1; this interaction allows the polyprotein trafficking to multivesicular bodies during virus assembly (By similarity). Part of the pre-integration complex (PIC) which is composed of viral genome, matrix protein, Vpr and integrase (By similarity).</text>
</comment>
<comment type="subunit">
    <molecule>Capsid protein p24</molecule>
    <text evidence="5 7">Homodimer; the homodimer further multimerizes as homohexamers or homopentamers. Interacts with human PPIA/CYPA (By similarity); This interaction stabilizes the capsid. Interacts with human NUP153 (By similarity). Interacts with host PDZD8; this interaction stabilizes the capsid (By similarity). Interacts with monkey TRIM5; this interaction destabilizes the capsid (By similarity).</text>
</comment>
<comment type="subunit">
    <molecule>Protease</molecule>
    <text evidence="5 7">Homodimer, whose active site consists of two apposed aspartic acid residues.</text>
</comment>
<comment type="subunit">
    <molecule>Reverse transcriptase/ribonuclease H</molecule>
    <text evidence="3">Heterodimer of p66 RT and p51 RT (RT p66/p51) (By similarity). Heterodimerization of RT is essential for DNA polymerase activity (By similarity). The overall folding of the subdomains is similar in p66 RT and p51 RT but the spatial arrangements of the subdomains are dramatically different (By similarity).</text>
</comment>
<comment type="subunit">
    <molecule>Integrase</molecule>
    <text evidence="4 5 7">Homotetramer; may further associate as a homohexadecamer (By similarity). Part of the pre-integration complex (PIC) which is composed of viral genome, matrix protein, Vpr and integrase. Interacts with human SMARCB1/INI1 and human PSIP1/LEDGF isoform 1. Interacts with human KPNA3; this interaction might play a role in nuclear import of the pre-integration complex (By similarity). Interacts with human NUP153; this interaction might play a role in nuclear import of the pre-integration complex (By similarity).</text>
</comment>
<comment type="subcellular location">
    <molecule>Gag-Pol polyprotein</molecule>
    <subcellularLocation>
        <location>Host cell membrane</location>
        <topology>Lipid-anchor</topology>
    </subcellularLocation>
    <subcellularLocation>
        <location>Host endosome</location>
        <location>Host multivesicular body</location>
    </subcellularLocation>
    <text evidence="7">These locations are linked to virus assembly sites. The main location is the cell membrane, but under some circumstances, late endosomal compartments can serve as productive sites for virion assembly.</text>
</comment>
<comment type="subcellular location">
    <molecule>Matrix protein p17</molecule>
    <subcellularLocation>
        <location>Virion membrane</location>
        <topology evidence="18">Lipid-anchor</topology>
    </subcellularLocation>
    <subcellularLocation>
        <location evidence="1">Host nucleus</location>
    </subcellularLocation>
    <subcellularLocation>
        <location evidence="1">Host cytoplasm</location>
    </subcellularLocation>
</comment>
<comment type="subcellular location">
    <molecule>Capsid protein p24</molecule>
    <subcellularLocation>
        <location evidence="18">Virion</location>
    </subcellularLocation>
</comment>
<comment type="subcellular location">
    <molecule>Nucleocapsid protein p7</molecule>
    <subcellularLocation>
        <location evidence="18">Virion</location>
    </subcellularLocation>
</comment>
<comment type="subcellular location">
    <molecule>Reverse transcriptase/ribonuclease H</molecule>
    <subcellularLocation>
        <location evidence="18">Virion</location>
    </subcellularLocation>
</comment>
<comment type="subcellular location">
    <molecule>Integrase</molecule>
    <subcellularLocation>
        <location evidence="18">Virion</location>
    </subcellularLocation>
    <subcellularLocation>
        <location evidence="18">Host nucleus</location>
    </subcellularLocation>
    <subcellularLocation>
        <location evidence="18">Host cytoplasm</location>
    </subcellularLocation>
    <text evidence="18">Nuclear at initial phase, cytoplasmic at assembly.</text>
</comment>
<comment type="alternative products">
    <event type="ribosomal frameshifting"/>
    <isoform>
        <id>Q9IDV9-1</id>
        <name>Gag-Pol polyprotein</name>
        <sequence type="displayed"/>
    </isoform>
    <isoform>
        <id>Q9IDV8-1</id>
        <name>Gag polyprotein</name>
        <sequence type="external"/>
    </isoform>
    <text>Translation results in the formation of the Gag polyprotein most of the time. Ribosomal frameshifting at the gag-pol genes boundary occurs at low frequency and produces the Gag-Pol polyprotein. This strategy of translation probably allows the virus to modulate the quantity of each viral protein. Maintenance of a correct Gag to Gag-Pol ratio is essential for RNA dimerization and viral infectivity.</text>
</comment>
<comment type="domain">
    <text evidence="1">The reverse transcriptase/ribonuclease H (RT) is structured in five subdomains: finger, palm, thumb, connection and RNase H. Within the palm subdomain, the 'primer grip' region is thought to be involved in the positioning of the primer terminus for accommodating the incoming nucleotide. The RNase H domain stabilizes the association of RT with primer-template (By similarity).</text>
</comment>
<comment type="domain">
    <text evidence="1">The tryptophan repeat motif is involved in RT p66/p51 dimerization.</text>
</comment>
<comment type="domain">
    <text evidence="1">Integrase core domain contains the D-x(n)-D-x(35)-E motif, named for the phylogenetically conserved glutamic acid and aspartic acid residues and the invariant 35 amino acid spacing between the second and third acidic residues. Each acidic residue of the D,D(35)E motif is independently essential for the 3'-processing and strand transfer activities of purified integrase protein (By similarity).</text>
</comment>
<comment type="PTM">
    <text evidence="11">Specific enzymatic cleavages by the viral protease yield mature proteins. The protease is released by autocatalytic cleavage. The polyprotein is cleaved during and after budding, this process is termed maturation. Proteolytic cleavage of p66 RT removes the RNase H domain to yield the p51 RT subunit. Nucleocapsid protein p7 might be further cleaved after virus entry (By similarity).</text>
</comment>
<comment type="PTM">
    <molecule>Matrix protein p17</molecule>
    <text evidence="5">Tyrosine phosphorylated presumably in the virion by a host kinase. Phosphorylation is apparently not a major regulator of membrane association.</text>
</comment>
<comment type="PTM">
    <molecule>Capsid protein p24</molecule>
    <text evidence="6">Phosphorylated possibly by host MAPK1; this phosphorylation is necessary for Pin1-mediated virion uncoating.</text>
</comment>
<comment type="PTM">
    <molecule>Nucleocapsid protein p7</molecule>
    <text evidence="2">Methylated by host PRMT6, impairing its function by reducing RNA annealing and the initiation of reverse transcription.</text>
</comment>
<comment type="miscellaneous">
    <text>The reverse transcriptase is an error-prone enzyme that lacks a proof-reading function. High mutations rate is a direct consequence of this characteristic. RT also displays frequent template switching leading to high recombination rate. Recombination mostly occurs between homologous regions of the two copackaged RNA genomes. If these two RNA molecules derive from different viral strains, reverse transcription will give rise to highly recombinated proviral DNAs.</text>
</comment>
<comment type="miscellaneous">
    <text>HIV-1 lineages are divided in three main groups, M (for Major), O (for Outlier), and N (for New, or Non-M, Non-O). The vast majority of strains found worldwide belong to the group M. Group O seems to be endemic to and largely confined to Cameroon and neighboring countries in West Central Africa, where these viruses represent a small minority of HIV-1 strains. The group N is represented by a limited number of isolates from Cameroonian persons. The group M is further subdivided in 9 clades or subtypes (A to D, F to H, J and K).</text>
</comment>
<comment type="miscellaneous">
    <text>Resistance to inhibitors associated with mutations are observed both in viral protease and in reverse transcriptase. Most of the time, single mutations confer only a modest reduction in drug susceptibility. Combination of several mutations is usually required to develop a high-level drug resistance. These mutations are predominantly found in clade B viruses and not in other genotypes. They are listed in the clade B representative isolate HXB2 (AC P04585).</text>
</comment>
<comment type="miscellaneous">
    <molecule>Isoform Gag-Pol polyprotein</molecule>
    <text>Produced by -1 ribosomal frameshifting.</text>
</comment>
<comment type="online information" name="HIV drug resistance mutations">
    <link uri="https://www.iasusa.org/hiv-drug-resistance/hiv-drug-resistance-mutations/"/>
</comment>
<comment type="online information" name="hivdb">
    <link uri="https://hivdb.stanford.edu"/>
    <text>HIV drug resistance database</text>
</comment>
<name>POL_HV1YB</name>
<gene>
    <name type="primary">gag-pol</name>
</gene>
<proteinExistence type="evidence at protein level"/>
<protein>
    <recommendedName>
        <fullName>Gag-Pol polyprotein</fullName>
    </recommendedName>
    <alternativeName>
        <fullName>Pr160Gag-Pol</fullName>
    </alternativeName>
    <component>
        <recommendedName>
            <fullName>Matrix protein p17</fullName>
            <shortName>MA</shortName>
        </recommendedName>
    </component>
    <component>
        <recommendedName>
            <fullName>Capsid protein p24</fullName>
            <shortName>CA</shortName>
        </recommendedName>
    </component>
    <component>
        <recommendedName>
            <fullName evidence="7">Spacer peptide 1</fullName>
            <shortName>SP1</shortName>
        </recommendedName>
        <alternativeName>
            <fullName>p2</fullName>
        </alternativeName>
    </component>
    <component>
        <recommendedName>
            <fullName>Nucleocapsid protein p7</fullName>
            <shortName>NC</shortName>
        </recommendedName>
    </component>
    <component>
        <recommendedName>
            <fullName>Transframe peptide</fullName>
            <shortName>TF</shortName>
        </recommendedName>
    </component>
    <component>
        <recommendedName>
            <fullName>p6-pol</fullName>
            <shortName>p6*</shortName>
        </recommendedName>
    </component>
    <component>
        <recommendedName>
            <fullName>Protease</fullName>
            <ecNumber>3.4.23.16</ecNumber>
        </recommendedName>
        <alternativeName>
            <fullName>PR</fullName>
        </alternativeName>
        <alternativeName>
            <fullName>Retropepsin</fullName>
        </alternativeName>
    </component>
    <component>
        <recommendedName>
            <fullName>Reverse transcriptase/ribonuclease H</fullName>
            <ecNumber>2.7.7.49</ecNumber>
            <ecNumber>2.7.7.7</ecNumber>
            <ecNumber>3.1.26.13</ecNumber>
        </recommendedName>
        <alternativeName>
            <fullName>Exoribonuclease H</fullName>
            <ecNumber>3.1.13.2</ecNumber>
        </alternativeName>
        <alternativeName>
            <fullName>p66 RT</fullName>
        </alternativeName>
    </component>
    <component>
        <recommendedName>
            <fullName>p51 RT</fullName>
        </recommendedName>
    </component>
    <component>
        <recommendedName>
            <fullName>p15</fullName>
        </recommendedName>
    </component>
    <component>
        <recommendedName>
            <fullName>Integrase</fullName>
            <shortName>IN</shortName>
            <ecNumber evidence="5">2.7.7.-</ecNumber>
            <ecNumber evidence="5">3.1.-.-</ecNumber>
        </recommendedName>
    </component>
</protein>
<accession>Q9IDV9</accession>
<feature type="initiator methionine" description="Removed; by host" evidence="1">
    <location>
        <position position="1"/>
    </location>
</feature>
<feature type="chain" id="PRO_0000261285" description="Gag-Pol polyprotein">
    <location>
        <begin position="2"/>
        <end position="1449"/>
    </location>
</feature>
<feature type="chain" id="PRO_0000246586" description="Matrix protein p17" evidence="1">
    <location>
        <begin position="2"/>
        <end position="134"/>
    </location>
</feature>
<feature type="chain" id="PRO_0000246587" description="Capsid protein p24" evidence="1">
    <location>
        <begin position="135"/>
        <end position="365"/>
    </location>
</feature>
<feature type="peptide" id="PRO_0000246588" description="Spacer peptide 1" evidence="1">
    <location>
        <begin position="366"/>
        <end position="379"/>
    </location>
</feature>
<feature type="chain" id="PRO_0000246589" description="Nucleocapsid protein p7" evidence="1">
    <location>
        <begin position="380"/>
        <end position="434" status="uncertain"/>
    </location>
</feature>
<feature type="peptide" id="PRO_0000246735" description="Transframe peptide" evidence="8">
    <location>
        <begin position="434" status="uncertain"/>
        <end position="442" status="uncertain"/>
    </location>
</feature>
<feature type="chain" id="PRO_0000246590" description="p6-pol" evidence="8">
    <location>
        <begin position="443" status="uncertain"/>
        <end position="497"/>
    </location>
</feature>
<feature type="chain" id="PRO_0000246591" description="Protease" evidence="1">
    <location>
        <begin position="499"/>
        <end position="597"/>
    </location>
</feature>
<feature type="chain" id="PRO_0000246592" description="Reverse transcriptase/ribonuclease H" evidence="1">
    <location>
        <begin position="598"/>
        <end position="1157"/>
    </location>
</feature>
<feature type="chain" id="PRO_0000246593" description="p51 RT" evidence="1">
    <location>
        <begin position="598"/>
        <end position="1037"/>
    </location>
</feature>
<feature type="chain" id="PRO_0000246594" description="p15" evidence="1">
    <location>
        <begin position="1038"/>
        <end position="1157"/>
    </location>
</feature>
<feature type="chain" id="PRO_0000246595" description="Integrase" evidence="1">
    <location>
        <begin position="1158"/>
        <end position="1449"/>
    </location>
</feature>
<feature type="domain" description="Peptidase A2" evidence="10">
    <location>
        <begin position="518"/>
        <end position="587"/>
    </location>
</feature>
<feature type="domain" description="Reverse transcriptase" evidence="11">
    <location>
        <begin position="641"/>
        <end position="831"/>
    </location>
</feature>
<feature type="domain" description="RNase H type-1" evidence="12">
    <location>
        <begin position="1031"/>
        <end position="1154"/>
    </location>
</feature>
<feature type="domain" description="Integrase catalytic" evidence="14">
    <location>
        <begin position="1211"/>
        <end position="1361"/>
    </location>
</feature>
<feature type="zinc finger region" description="CCHC-type 1" evidence="9">
    <location>
        <begin position="392"/>
        <end position="409"/>
    </location>
</feature>
<feature type="zinc finger region" description="CCHC-type 2" evidence="9">
    <location>
        <begin position="413"/>
        <end position="430"/>
    </location>
</feature>
<feature type="zinc finger region" description="Integrase-type" evidence="13">
    <location>
        <begin position="1160"/>
        <end position="1201"/>
    </location>
</feature>
<feature type="DNA-binding region" description="Integrase-type" evidence="15">
    <location>
        <begin position="1380"/>
        <end position="1427"/>
    </location>
</feature>
<feature type="region of interest" description="Interaction with Gp41" evidence="7">
    <location>
        <begin position="7"/>
        <end position="31"/>
    </location>
</feature>
<feature type="region of interest" description="Interaction with host CALM1" evidence="5">
    <location>
        <begin position="8"/>
        <end position="43"/>
    </location>
</feature>
<feature type="region of interest" description="Interaction with host AP3D1" evidence="7">
    <location>
        <begin position="12"/>
        <end position="19"/>
    </location>
</feature>
<feature type="region of interest" description="Interaction with membrane phosphatidylinositol 4,5-bisphosphate and RNA" evidence="7">
    <location>
        <begin position="14"/>
        <end position="33"/>
    </location>
</feature>
<feature type="region of interest" description="Interaction with membrane phosphatidylinositol 4,5-bisphosphate" evidence="7">
    <location>
        <begin position="73"/>
        <end position="77"/>
    </location>
</feature>
<feature type="region of interest" description="Disordered" evidence="17">
    <location>
        <begin position="105"/>
        <end position="128"/>
    </location>
</feature>
<feature type="region of interest" description="Interaction with human PPIA/CYPA and NUP153" evidence="7">
    <location>
        <begin position="191"/>
        <end position="229"/>
    </location>
</feature>
<feature type="region of interest" description="Dimerization/Multimerization of capsid protein p24" evidence="5">
    <location>
        <begin position="279"/>
        <end position="365"/>
    </location>
</feature>
<feature type="region of interest" description="Disordered" evidence="17">
    <location>
        <begin position="445"/>
        <end position="492"/>
    </location>
</feature>
<feature type="region of interest" description="Dimerization of protease" evidence="5">
    <location>
        <begin position="499"/>
        <end position="503"/>
    </location>
</feature>
<feature type="region of interest" description="Dimerization of protease" evidence="5">
    <location>
        <begin position="547"/>
        <end position="553"/>
    </location>
</feature>
<feature type="region of interest" description="Dimerization of protease" evidence="5">
    <location>
        <begin position="586"/>
        <end position="598"/>
    </location>
</feature>
<feature type="region of interest" description="RT 'primer grip'" evidence="1">
    <location>
        <begin position="824"/>
        <end position="832"/>
    </location>
</feature>
<feature type="short sequence motif" description="Nuclear export signal" evidence="1">
    <location>
        <begin position="16"/>
        <end position="22"/>
    </location>
</feature>
<feature type="short sequence motif" description="Nuclear localization signal" evidence="1">
    <location>
        <begin position="26"/>
        <end position="32"/>
    </location>
</feature>
<feature type="short sequence motif" description="Tryptophan repeat motif" evidence="1">
    <location>
        <begin position="995"/>
        <end position="1011"/>
    </location>
</feature>
<feature type="compositionally biased region" description="Basic and acidic residues" evidence="17">
    <location>
        <begin position="105"/>
        <end position="119"/>
    </location>
</feature>
<feature type="compositionally biased region" description="Basic and acidic residues" evidence="17">
    <location>
        <begin position="446"/>
        <end position="461"/>
    </location>
</feature>
<feature type="compositionally biased region" description="Basic and acidic residues" evidence="17">
    <location>
        <begin position="473"/>
        <end position="491"/>
    </location>
</feature>
<feature type="active site" description="For protease activity; shared with dimeric partner" evidence="16">
    <location>
        <position position="523"/>
    </location>
</feature>
<feature type="binding site" evidence="1">
    <location>
        <position position="707"/>
    </location>
    <ligand>
        <name>Mg(2+)</name>
        <dbReference type="ChEBI" id="CHEBI:18420"/>
        <label>1</label>
        <note>catalytic; for reverse transcriptase activity</note>
    </ligand>
</feature>
<feature type="binding site" evidence="1">
    <location>
        <position position="782"/>
    </location>
    <ligand>
        <name>Mg(2+)</name>
        <dbReference type="ChEBI" id="CHEBI:18420"/>
        <label>1</label>
        <note>catalytic; for reverse transcriptase activity</note>
    </ligand>
</feature>
<feature type="binding site" evidence="1">
    <location>
        <position position="783"/>
    </location>
    <ligand>
        <name>Mg(2+)</name>
        <dbReference type="ChEBI" id="CHEBI:18420"/>
        <label>1</label>
        <note>catalytic; for reverse transcriptase activity</note>
    </ligand>
</feature>
<feature type="binding site" evidence="1">
    <location>
        <position position="1040"/>
    </location>
    <ligand>
        <name>Mg(2+)</name>
        <dbReference type="ChEBI" id="CHEBI:18420"/>
        <label>2</label>
        <note>catalytic; for RNase H activity</note>
    </ligand>
</feature>
<feature type="binding site" evidence="1">
    <location>
        <position position="1075"/>
    </location>
    <ligand>
        <name>Mg(2+)</name>
        <dbReference type="ChEBI" id="CHEBI:18420"/>
        <label>2</label>
        <note>catalytic; for RNase H activity</note>
    </ligand>
</feature>
<feature type="binding site" evidence="1">
    <location>
        <position position="1095"/>
    </location>
    <ligand>
        <name>Mg(2+)</name>
        <dbReference type="ChEBI" id="CHEBI:18420"/>
        <label>2</label>
        <note>catalytic; for RNase H activity</note>
    </ligand>
</feature>
<feature type="binding site" evidence="1">
    <location>
        <position position="1146"/>
    </location>
    <ligand>
        <name>Mg(2+)</name>
        <dbReference type="ChEBI" id="CHEBI:18420"/>
        <label>2</label>
        <note>catalytic; for RNase H activity</note>
    </ligand>
</feature>
<feature type="binding site" evidence="13">
    <location>
        <position position="1169"/>
    </location>
    <ligand>
        <name>Zn(2+)</name>
        <dbReference type="ChEBI" id="CHEBI:29105"/>
    </ligand>
</feature>
<feature type="binding site" evidence="13">
    <location>
        <position position="1173"/>
    </location>
    <ligand>
        <name>Zn(2+)</name>
        <dbReference type="ChEBI" id="CHEBI:29105"/>
    </ligand>
</feature>
<feature type="binding site" evidence="13">
    <location>
        <position position="1197"/>
    </location>
    <ligand>
        <name>Zn(2+)</name>
        <dbReference type="ChEBI" id="CHEBI:29105"/>
    </ligand>
</feature>
<feature type="binding site" evidence="13">
    <location>
        <position position="1200"/>
    </location>
    <ligand>
        <name>Zn(2+)</name>
        <dbReference type="ChEBI" id="CHEBI:29105"/>
    </ligand>
</feature>
<feature type="binding site" evidence="1">
    <location>
        <position position="1221"/>
    </location>
    <ligand>
        <name>Mg(2+)</name>
        <dbReference type="ChEBI" id="CHEBI:18420"/>
        <label>3</label>
        <note>catalytic; for integrase activity</note>
    </ligand>
</feature>
<feature type="binding site" evidence="1">
    <location>
        <position position="1273"/>
    </location>
    <ligand>
        <name>Mg(2+)</name>
        <dbReference type="ChEBI" id="CHEBI:18420"/>
        <label>3</label>
        <note>catalytic; for integrase activity</note>
    </ligand>
</feature>
<feature type="binding site" evidence="5">
    <location>
        <position position="1309"/>
    </location>
    <ligand>
        <name>Mg(2+)</name>
        <dbReference type="ChEBI" id="CHEBI:18420"/>
        <label>3</label>
        <note>catalytic; for integrase activity</note>
    </ligand>
</feature>
<feature type="site" description="Cleavage; by viral protease" evidence="1">
    <location>
        <begin position="134"/>
        <end position="135"/>
    </location>
</feature>
<feature type="site" description="Cis/trans isomerization of proline peptide bond; by human PPIA/CYPA" evidence="1">
    <location>
        <begin position="223"/>
        <end position="224"/>
    </location>
</feature>
<feature type="site" description="Cleavage; by viral protease" evidence="1">
    <location>
        <begin position="365"/>
        <end position="366"/>
    </location>
</feature>
<feature type="site" description="Cleavage; by viral protease" evidence="1">
    <location>
        <begin position="379"/>
        <end position="380"/>
    </location>
</feature>
<feature type="site" description="Cleavage; by viral protease" evidence="8">
    <location>
        <begin position="433" status="uncertain"/>
        <end position="434" status="uncertain"/>
    </location>
</feature>
<feature type="site" description="Cleavage; by viral protease" evidence="8">
    <location>
        <begin position="442" status="uncertain"/>
        <end position="443" status="uncertain"/>
    </location>
</feature>
<feature type="site" description="Cleavage; by viral protease" evidence="1">
    <location>
        <begin position="497"/>
        <end position="498"/>
    </location>
</feature>
<feature type="site" description="Cleavage; by viral protease" evidence="1">
    <location>
        <begin position="596"/>
        <end position="597"/>
    </location>
</feature>
<feature type="site" description="Essential for RT p66/p51 heterodimerization" evidence="1">
    <location>
        <position position="997"/>
    </location>
</feature>
<feature type="site" description="Essential for RT p66/p51 heterodimerization" evidence="1">
    <location>
        <begin position="1010"/>
        <end position="1011"/>
    </location>
</feature>
<feature type="site" description="Cleavage; by viral protease; partial" evidence="8">
    <location>
        <begin position="1036" status="uncertain"/>
        <end position="1037" status="uncertain"/>
    </location>
</feature>
<feature type="site" description="Cleavage; by viral protease" evidence="1">
    <location>
        <begin position="1157"/>
        <end position="1158"/>
    </location>
</feature>
<feature type="modified residue" description="Phosphotyrosine; by host" evidence="1">
    <location>
        <position position="134"/>
    </location>
</feature>
<feature type="lipid moiety-binding region" description="N-myristoyl glycine; by host" evidence="1">
    <location>
        <position position="2"/>
    </location>
</feature>
<sequence length="1449" mass="162613">MGARASVLTGGKLDQWEAIYLRPGGKKKYRLKHLVWASRELERFACNPGLMDTANGCAQLINQLEPALKTGSEGLRSLXNTLAVLYCVHSNIPVHNTQEALDKIKEKQEQHKSEPKKPEAGTAAAADSSISRNYPLVQNAQGQMVHQPLTPRTLNAWVKVIEEKAFNPEIIPMFMALSEGATPSDLNSMLNTVGGHQAAMQMLKEVINEEAAEWDRTHPAPVGPLPPGQMRDPRGSDIAGTTSTLAEQVAWMTSNPPIPVGDIYRRWIVLGLNRIVRMYSPVSILEIKQGPKEPFRDYVDRFYKTLRAEQATQDVKNWMTETLLVQNANPDCKQILKALGPGATLEEMMTACQGVGGPAHKARVLAEAMAQAQTATSVFVQRGNFKGIRKTIKCFNCGKEGHLARNCKAPRRRGCWKCGQEGHQMKDCKNEGXQANFRKGLVSLQRETRKLPPDNNKERAHSPATRELWVSGGEEHTGKGDAGEPGEDRDLSVPTLNFPQITLWQRPVXAVKIGKEIREALLDTGADDTVIEEIQLEGKWKPKMIGGIGGFIKVRQYDNITIDIQGRKAVGTVLVGPTPVNIIGRNFLTQIGCTLNFPISPIETVPVKLKPGMDGPRVKQWPLTAEKIEALREICTEMEKEGKISRIGPENPYNTPIFAIKKKDSTKWRKLVDFRELNKRTQEFWEVQLGIPHPAGLKQKKSVTVXDVGDAYFSCPLDKDFRKYTAFTIPSINNETPGIRYQYNVLPQGWKGSPAIFQSSMTKILEPFRKKHPEIIIYQYMDDLYVGSDLEIAQHRETVEELRGHLLKWGFTTPDKKHQKEPPFLWMGYELHPDKWTVQPIKLPEKEVWTVNDIQKLVGKLNWASQIYPGIKVKQLCKLIRGTKALTEVVTFTQEAELELAENREILKEPLHGVYYDPGKELIAEIQKQGQGQWTYQIYQEPYKNLKTGKYAKXRSAHTNDIKELAAVVQKVATESIVIWGKTPKFKLPVQKEVWETWWTEHWQATWIPEWEFVNTPPLVKLWYQLETEPISGAETYYVDGAANKETKLGKAGFVTDRGRQKVVSIENTTNQKAELQAILLALQESGQEANIVTDSQYAMGIIHSQPDKSESDLVGQIIEELIKKERVYLSWVPAHKGIGGNEQVDXLVSSGIRXVLFLDGIEKAQEEHERYHSNWKAMASDFNLPPIVAKEIVASCDKCQLKGEAMHGQINCSPGVWQLDCTHLEGKIILVAVHVASGYLEAEVIPAETGQETAYFILKLAGRWPVKVIHTDNGPNFISATVKAACWWAGIKQEFGIPYNPQSQGAVESMNKELKKIIGQIRDQAEHLKTAVQMAVFIHNFKRKGGIGGXTAGERIIDIIATDIQTTKLQTQILKVQNFXVYYRDSRDPIWKGPAKLLWKGEGAVVIQDNGDIKVVPRRKAKIIRDYGKQMAGDGCVASGQDENQDME</sequence>